<protein>
    <recommendedName>
        <fullName>Hyaluronidase-2</fullName>
        <shortName>Hyal-2</shortName>
        <ecNumber>3.2.1.35</ecNumber>
    </recommendedName>
    <alternativeName>
        <fullName>Hyaluronoglucosaminidase-2</fullName>
    </alternativeName>
</protein>
<organism>
    <name type="scientific">Mus musculus</name>
    <name type="common">Mouse</name>
    <dbReference type="NCBI Taxonomy" id="10090"/>
    <lineage>
        <taxon>Eukaryota</taxon>
        <taxon>Metazoa</taxon>
        <taxon>Chordata</taxon>
        <taxon>Craniata</taxon>
        <taxon>Vertebrata</taxon>
        <taxon>Euteleostomi</taxon>
        <taxon>Mammalia</taxon>
        <taxon>Eutheria</taxon>
        <taxon>Euarchontoglires</taxon>
        <taxon>Glires</taxon>
        <taxon>Rodentia</taxon>
        <taxon>Myomorpha</taxon>
        <taxon>Muroidea</taxon>
        <taxon>Muridae</taxon>
        <taxon>Murinae</taxon>
        <taxon>Mus</taxon>
        <taxon>Mus</taxon>
    </lineage>
</organism>
<accession>O35632</accession>
<accession>O35631</accession>
<accession>Q99MS9</accession>
<accession>Q99MT0</accession>
<dbReference type="EC" id="3.2.1.35"/>
<dbReference type="EMBL" id="AJ000059">
    <property type="protein sequence ID" value="CAA03888.1"/>
    <property type="molecule type" value="mRNA"/>
</dbReference>
<dbReference type="EMBL" id="AJ000060">
    <property type="protein sequence ID" value="CAA03889.1"/>
    <property type="molecule type" value="Genomic_DNA"/>
</dbReference>
<dbReference type="EMBL" id="AF302843">
    <property type="protein sequence ID" value="AAK28481.1"/>
    <property type="molecule type" value="mRNA"/>
</dbReference>
<dbReference type="EMBL" id="AF302844">
    <property type="protein sequence ID" value="AAK28482.1"/>
    <property type="molecule type" value="mRNA"/>
</dbReference>
<dbReference type="EMBL" id="AF422177">
    <property type="protein sequence ID" value="AAL17823.1"/>
    <property type="molecule type" value="mRNA"/>
</dbReference>
<dbReference type="CCDS" id="CCDS23496.1"/>
<dbReference type="RefSeq" id="NP_001396600.1">
    <property type="nucleotide sequence ID" value="NM_001409671.1"/>
</dbReference>
<dbReference type="RefSeq" id="NP_001396601.1">
    <property type="nucleotide sequence ID" value="NM_001409672.1"/>
</dbReference>
<dbReference type="RefSeq" id="NP_034619.2">
    <property type="nucleotide sequence ID" value="NM_010489.2"/>
</dbReference>
<dbReference type="RefSeq" id="XP_006511706.1">
    <property type="nucleotide sequence ID" value="XM_006511643.5"/>
</dbReference>
<dbReference type="RefSeq" id="XP_006511707.1">
    <property type="nucleotide sequence ID" value="XM_006511644.3"/>
</dbReference>
<dbReference type="RefSeq" id="XP_006511708.1">
    <property type="nucleotide sequence ID" value="XM_006511645.3"/>
</dbReference>
<dbReference type="RefSeq" id="XP_036010506.1">
    <property type="nucleotide sequence ID" value="XM_036154613.1"/>
</dbReference>
<dbReference type="SMR" id="O35632"/>
<dbReference type="FunCoup" id="O35632">
    <property type="interactions" value="654"/>
</dbReference>
<dbReference type="STRING" id="10090.ENSMUSP00000141280"/>
<dbReference type="CAZy" id="GH56">
    <property type="family name" value="Glycoside Hydrolase Family 56"/>
</dbReference>
<dbReference type="GlyConnect" id="2375">
    <property type="glycosylation" value="1 N-Linked glycan (1 site)"/>
</dbReference>
<dbReference type="GlyCosmos" id="O35632">
    <property type="glycosylation" value="5 sites, 1 glycan"/>
</dbReference>
<dbReference type="GlyGen" id="O35632">
    <property type="glycosylation" value="5 sites, 4 N-linked glycans (4 sites)"/>
</dbReference>
<dbReference type="iPTMnet" id="O35632"/>
<dbReference type="PhosphoSitePlus" id="O35632"/>
<dbReference type="jPOST" id="O35632"/>
<dbReference type="PaxDb" id="10090-ENSMUSP00000010191"/>
<dbReference type="PeptideAtlas" id="O35632"/>
<dbReference type="ProteomicsDB" id="273333"/>
<dbReference type="Pumba" id="O35632"/>
<dbReference type="Antibodypedia" id="30889">
    <property type="antibodies" value="271 antibodies from 32 providers"/>
</dbReference>
<dbReference type="DNASU" id="15587"/>
<dbReference type="Ensembl" id="ENSMUST00000010191.13">
    <property type="protein sequence ID" value="ENSMUSP00000010191.8"/>
    <property type="gene ID" value="ENSMUSG00000010047.13"/>
</dbReference>
<dbReference type="Ensembl" id="ENSMUST00000195752.6">
    <property type="protein sequence ID" value="ENSMUSP00000141280.2"/>
    <property type="gene ID" value="ENSMUSG00000010047.13"/>
</dbReference>
<dbReference type="GeneID" id="15587"/>
<dbReference type="KEGG" id="mmu:15587"/>
<dbReference type="UCSC" id="uc009rlu.1">
    <property type="organism name" value="mouse"/>
</dbReference>
<dbReference type="AGR" id="MGI:1196334"/>
<dbReference type="CTD" id="8692"/>
<dbReference type="MGI" id="MGI:1196334">
    <property type="gene designation" value="Hyal2"/>
</dbReference>
<dbReference type="VEuPathDB" id="HostDB:ENSMUSG00000010047"/>
<dbReference type="eggNOG" id="ENOG502QUYI">
    <property type="taxonomic scope" value="Eukaryota"/>
</dbReference>
<dbReference type="GeneTree" id="ENSGT01020000230364"/>
<dbReference type="HOGENOM" id="CLU_036366_0_0_1"/>
<dbReference type="InParanoid" id="O35632"/>
<dbReference type="OMA" id="TKNRESC"/>
<dbReference type="OrthoDB" id="5796153at2759"/>
<dbReference type="PhylomeDB" id="O35632"/>
<dbReference type="TreeFam" id="TF321598"/>
<dbReference type="BRENDA" id="3.2.1.35">
    <property type="organism ID" value="3474"/>
</dbReference>
<dbReference type="Reactome" id="R-MMU-2160916">
    <property type="pathway name" value="Hyaluronan uptake and degradation"/>
</dbReference>
<dbReference type="BioGRID-ORCS" id="15587">
    <property type="hits" value="3 hits in 80 CRISPR screens"/>
</dbReference>
<dbReference type="PRO" id="PR:O35632"/>
<dbReference type="Proteomes" id="UP000000589">
    <property type="component" value="Chromosome 9"/>
</dbReference>
<dbReference type="RNAct" id="O35632">
    <property type="molecule type" value="protein"/>
</dbReference>
<dbReference type="Bgee" id="ENSMUSG00000010047">
    <property type="expression patterns" value="Expressed in right kidney and 206 other cell types or tissues"/>
</dbReference>
<dbReference type="ExpressionAtlas" id="O35632">
    <property type="expression patterns" value="baseline and differential"/>
</dbReference>
<dbReference type="GO" id="GO:0016324">
    <property type="term" value="C:apical plasma membrane"/>
    <property type="evidence" value="ECO:0000250"/>
    <property type="project" value="UniProtKB"/>
</dbReference>
<dbReference type="GO" id="GO:0009986">
    <property type="term" value="C:cell surface"/>
    <property type="evidence" value="ECO:0000314"/>
    <property type="project" value="BHF-UCL"/>
</dbReference>
<dbReference type="GO" id="GO:0031410">
    <property type="term" value="C:cytoplasmic vesicle"/>
    <property type="evidence" value="ECO:0000250"/>
    <property type="project" value="UniProtKB"/>
</dbReference>
<dbReference type="GO" id="GO:0005829">
    <property type="term" value="C:cytosol"/>
    <property type="evidence" value="ECO:0000250"/>
    <property type="project" value="UniProtKB"/>
</dbReference>
<dbReference type="GO" id="GO:0030139">
    <property type="term" value="C:endocytic vesicle"/>
    <property type="evidence" value="ECO:0000250"/>
    <property type="project" value="UniProtKB"/>
</dbReference>
<dbReference type="GO" id="GO:0000139">
    <property type="term" value="C:Golgi membrane"/>
    <property type="evidence" value="ECO:0000250"/>
    <property type="project" value="UniProtKB"/>
</dbReference>
<dbReference type="GO" id="GO:0005764">
    <property type="term" value="C:lysosome"/>
    <property type="evidence" value="ECO:0000250"/>
    <property type="project" value="UniProtKB"/>
</dbReference>
<dbReference type="GO" id="GO:0045121">
    <property type="term" value="C:membrane raft"/>
    <property type="evidence" value="ECO:0000314"/>
    <property type="project" value="UniProtKB"/>
</dbReference>
<dbReference type="GO" id="GO:0005902">
    <property type="term" value="C:microvillus"/>
    <property type="evidence" value="ECO:0000250"/>
    <property type="project" value="UniProtKB"/>
</dbReference>
<dbReference type="GO" id="GO:0048471">
    <property type="term" value="C:perinuclear region of cytoplasm"/>
    <property type="evidence" value="ECO:0000250"/>
    <property type="project" value="UniProtKB"/>
</dbReference>
<dbReference type="GO" id="GO:0005886">
    <property type="term" value="C:plasma membrane"/>
    <property type="evidence" value="ECO:0000314"/>
    <property type="project" value="UniProtKB"/>
</dbReference>
<dbReference type="GO" id="GO:0090575">
    <property type="term" value="C:RNA polymerase II transcription regulator complex"/>
    <property type="evidence" value="ECO:0000314"/>
    <property type="project" value="BHF-UCL"/>
</dbReference>
<dbReference type="GO" id="GO:0098552">
    <property type="term" value="C:side of membrane"/>
    <property type="evidence" value="ECO:0007669"/>
    <property type="project" value="UniProtKB-KW"/>
</dbReference>
<dbReference type="GO" id="GO:0019899">
    <property type="term" value="F:enzyme binding"/>
    <property type="evidence" value="ECO:0000353"/>
    <property type="project" value="BHF-UCL"/>
</dbReference>
<dbReference type="GO" id="GO:0005540">
    <property type="term" value="F:hyaluronic acid binding"/>
    <property type="evidence" value="ECO:0000250"/>
    <property type="project" value="UniProtKB"/>
</dbReference>
<dbReference type="GO" id="GO:0033906">
    <property type="term" value="F:hyaluronoglucuronidase activity"/>
    <property type="evidence" value="ECO:0000250"/>
    <property type="project" value="UniProtKB"/>
</dbReference>
<dbReference type="GO" id="GO:0004415">
    <property type="term" value="F:hyalurononglucosaminidase activity"/>
    <property type="evidence" value="ECO:0000315"/>
    <property type="project" value="MGI"/>
</dbReference>
<dbReference type="GO" id="GO:0030294">
    <property type="term" value="F:receptor signaling protein tyrosine kinase inhibitor activity"/>
    <property type="evidence" value="ECO:0000250"/>
    <property type="project" value="UniProtKB"/>
</dbReference>
<dbReference type="GO" id="GO:0030971">
    <property type="term" value="F:receptor tyrosine kinase binding"/>
    <property type="evidence" value="ECO:0007669"/>
    <property type="project" value="Ensembl"/>
</dbReference>
<dbReference type="GO" id="GO:0050431">
    <property type="term" value="F:transforming growth factor beta binding"/>
    <property type="evidence" value="ECO:0000353"/>
    <property type="project" value="BHF-UCL"/>
</dbReference>
<dbReference type="GO" id="GO:0001618">
    <property type="term" value="F:virus receptor activity"/>
    <property type="evidence" value="ECO:0000314"/>
    <property type="project" value="UniProtKB"/>
</dbReference>
<dbReference type="GO" id="GO:0005975">
    <property type="term" value="P:carbohydrate metabolic process"/>
    <property type="evidence" value="ECO:0007669"/>
    <property type="project" value="InterPro"/>
</dbReference>
<dbReference type="GO" id="GO:0051216">
    <property type="term" value="P:cartilage development"/>
    <property type="evidence" value="ECO:0000250"/>
    <property type="project" value="UniProtKB"/>
</dbReference>
<dbReference type="GO" id="GO:0044344">
    <property type="term" value="P:cellular response to fibroblast growth factor stimulus"/>
    <property type="evidence" value="ECO:0000250"/>
    <property type="project" value="UniProtKB"/>
</dbReference>
<dbReference type="GO" id="GO:0071347">
    <property type="term" value="P:cellular response to interleukin-1"/>
    <property type="evidence" value="ECO:0000250"/>
    <property type="project" value="UniProtKB"/>
</dbReference>
<dbReference type="GO" id="GO:0071560">
    <property type="term" value="P:cellular response to transforming growth factor beta stimulus"/>
    <property type="evidence" value="ECO:0000314"/>
    <property type="project" value="BHF-UCL"/>
</dbReference>
<dbReference type="GO" id="GO:0071356">
    <property type="term" value="P:cellular response to tumor necrosis factor"/>
    <property type="evidence" value="ECO:0007669"/>
    <property type="project" value="Ensembl"/>
</dbReference>
<dbReference type="GO" id="GO:0071493">
    <property type="term" value="P:cellular response to UV-B"/>
    <property type="evidence" value="ECO:0000250"/>
    <property type="project" value="UniProtKB"/>
</dbReference>
<dbReference type="GO" id="GO:0051607">
    <property type="term" value="P:defense response to virus"/>
    <property type="evidence" value="ECO:0000314"/>
    <property type="project" value="UniProtKB"/>
</dbReference>
<dbReference type="GO" id="GO:0006027">
    <property type="term" value="P:glycosaminoglycan catabolic process"/>
    <property type="evidence" value="ECO:0000250"/>
    <property type="project" value="UniProtKB"/>
</dbReference>
<dbReference type="GO" id="GO:0002244">
    <property type="term" value="P:hematopoietic progenitor cell differentiation"/>
    <property type="evidence" value="ECO:0000315"/>
    <property type="project" value="MGI"/>
</dbReference>
<dbReference type="GO" id="GO:0030214">
    <property type="term" value="P:hyaluronan catabolic process"/>
    <property type="evidence" value="ECO:0000315"/>
    <property type="project" value="MGI"/>
</dbReference>
<dbReference type="GO" id="GO:0042117">
    <property type="term" value="P:monocyte activation"/>
    <property type="evidence" value="ECO:0000250"/>
    <property type="project" value="UniProtKB"/>
</dbReference>
<dbReference type="GO" id="GO:0060586">
    <property type="term" value="P:multicellular organismal-level iron ion homeostasis"/>
    <property type="evidence" value="ECO:0000315"/>
    <property type="project" value="MGI"/>
</dbReference>
<dbReference type="GO" id="GO:0030308">
    <property type="term" value="P:negative regulation of cell growth"/>
    <property type="evidence" value="ECO:0000250"/>
    <property type="project" value="UniProtKB"/>
</dbReference>
<dbReference type="GO" id="GO:0010764">
    <property type="term" value="P:negative regulation of fibroblast migration"/>
    <property type="evidence" value="ECO:0000250"/>
    <property type="project" value="UniProtKB"/>
</dbReference>
<dbReference type="GO" id="GO:0051898">
    <property type="term" value="P:negative regulation of phosphatidylinositol 3-kinase/protein kinase B signal transduction"/>
    <property type="evidence" value="ECO:0000250"/>
    <property type="project" value="UniProtKB"/>
</dbReference>
<dbReference type="GO" id="GO:2001238">
    <property type="term" value="P:positive regulation of extrinsic apoptotic signaling pathway"/>
    <property type="evidence" value="ECO:0000314"/>
    <property type="project" value="MGI"/>
</dbReference>
<dbReference type="GO" id="GO:0050729">
    <property type="term" value="P:positive regulation of inflammatory response"/>
    <property type="evidence" value="ECO:0000250"/>
    <property type="project" value="UniProtKB"/>
</dbReference>
<dbReference type="GO" id="GO:0032755">
    <property type="term" value="P:positive regulation of interleukin-6 production"/>
    <property type="evidence" value="ECO:0000250"/>
    <property type="project" value="UniProtKB"/>
</dbReference>
<dbReference type="GO" id="GO:0032757">
    <property type="term" value="P:positive regulation of interleukin-8 production"/>
    <property type="evidence" value="ECO:0000250"/>
    <property type="project" value="UniProtKB"/>
</dbReference>
<dbReference type="GO" id="GO:0042307">
    <property type="term" value="P:positive regulation of protein import into nucleus"/>
    <property type="evidence" value="ECO:0000314"/>
    <property type="project" value="BHF-UCL"/>
</dbReference>
<dbReference type="GO" id="GO:0045944">
    <property type="term" value="P:positive regulation of transcription by RNA polymerase II"/>
    <property type="evidence" value="ECO:0000314"/>
    <property type="project" value="BHF-UCL"/>
</dbReference>
<dbReference type="GO" id="GO:0035810">
    <property type="term" value="P:positive regulation of urine volume"/>
    <property type="evidence" value="ECO:0000250"/>
    <property type="project" value="UniProtKB"/>
</dbReference>
<dbReference type="GO" id="GO:0070295">
    <property type="term" value="P:renal water absorption"/>
    <property type="evidence" value="ECO:0000250"/>
    <property type="project" value="UniProtKB"/>
</dbReference>
<dbReference type="GO" id="GO:0046677">
    <property type="term" value="P:response to antibiotic"/>
    <property type="evidence" value="ECO:0007669"/>
    <property type="project" value="Ensembl"/>
</dbReference>
<dbReference type="GO" id="GO:0000302">
    <property type="term" value="P:response to reactive oxygen species"/>
    <property type="evidence" value="ECO:0000250"/>
    <property type="project" value="UniProtKB"/>
</dbReference>
<dbReference type="GO" id="GO:0009615">
    <property type="term" value="P:response to virus"/>
    <property type="evidence" value="ECO:0000314"/>
    <property type="project" value="UniProtKB"/>
</dbReference>
<dbReference type="GO" id="GO:0048705">
    <property type="term" value="P:skeletal system morphogenesis"/>
    <property type="evidence" value="ECO:0000315"/>
    <property type="project" value="MGI"/>
</dbReference>
<dbReference type="GO" id="GO:0046718">
    <property type="term" value="P:symbiont entry into host cell"/>
    <property type="evidence" value="ECO:0000250"/>
    <property type="project" value="UniProtKB"/>
</dbReference>
<dbReference type="FunFam" id="3.20.20.70:FF:000065">
    <property type="entry name" value="Hyaluronidase"/>
    <property type="match status" value="1"/>
</dbReference>
<dbReference type="Gene3D" id="3.20.20.70">
    <property type="entry name" value="Aldolase class I"/>
    <property type="match status" value="1"/>
</dbReference>
<dbReference type="InterPro" id="IPR013785">
    <property type="entry name" value="Aldolase_TIM"/>
</dbReference>
<dbReference type="InterPro" id="IPR017853">
    <property type="entry name" value="Glycoside_hydrolase_SF"/>
</dbReference>
<dbReference type="InterPro" id="IPR018155">
    <property type="entry name" value="Hyaluronidase"/>
</dbReference>
<dbReference type="PANTHER" id="PTHR11769">
    <property type="entry name" value="HYALURONIDASE"/>
    <property type="match status" value="1"/>
</dbReference>
<dbReference type="PANTHER" id="PTHR11769:SF6">
    <property type="entry name" value="HYALURONIDASE-2"/>
    <property type="match status" value="1"/>
</dbReference>
<dbReference type="Pfam" id="PF01630">
    <property type="entry name" value="Glyco_hydro_56"/>
    <property type="match status" value="1"/>
</dbReference>
<dbReference type="PIRSF" id="PIRSF038193">
    <property type="entry name" value="Hyaluronidase"/>
    <property type="match status" value="1"/>
</dbReference>
<dbReference type="PRINTS" id="PR00846">
    <property type="entry name" value="GLHYDRLASE56"/>
</dbReference>
<dbReference type="SUPFAM" id="SSF51445">
    <property type="entry name" value="(Trans)glycosidases"/>
    <property type="match status" value="1"/>
</dbReference>
<dbReference type="PROSITE" id="PS00022">
    <property type="entry name" value="EGF_1"/>
    <property type="match status" value="1"/>
</dbReference>
<dbReference type="PROSITE" id="PS01186">
    <property type="entry name" value="EGF_2"/>
    <property type="match status" value="1"/>
</dbReference>
<evidence type="ECO:0000250" key="1"/>
<evidence type="ECO:0000250" key="2">
    <source>
        <dbReference type="UniProtKB" id="Q12891"/>
    </source>
</evidence>
<evidence type="ECO:0000255" key="3"/>
<evidence type="ECO:0000269" key="4">
    <source>
    </source>
</evidence>
<evidence type="ECO:0000269" key="5">
    <source>
    </source>
</evidence>
<evidence type="ECO:0000269" key="6">
    <source>
    </source>
</evidence>
<evidence type="ECO:0000269" key="7">
    <source>
    </source>
</evidence>
<evidence type="ECO:0000269" key="8">
    <source>
    </source>
</evidence>
<evidence type="ECO:0000269" key="9">
    <source>
    </source>
</evidence>
<evidence type="ECO:0000305" key="10"/>
<evidence type="ECO:0000305" key="11">
    <source>
    </source>
</evidence>
<comment type="function">
    <text evidence="4 6 7 8 11">Catalyzes hyaluronan degradation into small fragments that are endocytosed and degraded in lysosomes by HYAL1 and exoglycosidases (Probable). Essential for the breakdown of extracellular matrix hyaluronan (PubMed:18772348, PubMed:23172227, PubMed:26515055, PubMed:28081210).</text>
</comment>
<comment type="catalytic activity">
    <reaction>
        <text>Random hydrolysis of (1-&gt;4)-linkages between N-acetyl-beta-D-glucosamine and D-glucuronate residues in hyaluronate.</text>
        <dbReference type="EC" id="3.2.1.35"/>
    </reaction>
</comment>
<comment type="subunit">
    <text evidence="2">Interacts with MST1R.</text>
</comment>
<comment type="subcellular location">
    <subcellularLocation>
        <location evidence="7">Cell membrane</location>
        <topology evidence="2">Lipid-anchor</topology>
        <topology evidence="2">GPI-anchor</topology>
    </subcellularLocation>
</comment>
<comment type="tissue specificity">
    <text evidence="4 7 9">Widely expressed, with highest expression levels in kidney, lung and liver (at protein level).</text>
</comment>
<comment type="developmental stage">
    <text evidence="9">In the brain, expressed during embryonic development at least from 10.5 dpc. Expression is down-regulated after birth and barely detectable in the adult brain.</text>
</comment>
<comment type="disruption phenotype">
    <text evidence="4 6 7 8">Knockout mice are viable and fertile, though a deficit in homozygous animals is observed at weaning and survival appears slightly lower over an 18-month observation period (PubMed:18772348, PubMed:23172227). Mice display craniofacial and cervical vertebrae abnormalities (PubMed:18772348). They show reduced ossification and underdevelopment of viscerocranial bones, particularly the vomer, consistent with submucosal cleft palate (PubMed:28081210). Homozygous animals show cardiac anomalies, such as valvular thickening and atrial dilatation (PubMed:23172227, PubMed:28081210). Cor triatriatum sinister is detected in half of the homozygous mice (PubMed:28081210). The animals with acute cardiac phenotype also show severe lung fibrosis (PubMed:23172227). Elevated plasma hyaluronan levels, accumulation of hyaluronan in various tissues, including heart and lung, and moderately increased plasma hyaluronidase activity are observed in knockout mice (PubMed:18772348, PubMed:23172227, PubMed:26515055, PubMed:28081210). Animals show the presence of iron deposits in the liver, the kidney and the spleen, possibly due to chronic intravascular hemolysis (PubMed:18772348). All animals exhibit hearing loss (PubMed:28081210). Of note, homozygous mice could not be obtained on an inbred background. Viable homozygous animals were obtained from heterozygous intercrosses of mice maintained on an outbred (C129; CD1; C57BL/6) background (PubMed:28081210).</text>
</comment>
<comment type="similarity">
    <text evidence="10">Belongs to the glycosyl hydrolase 56 family.</text>
</comment>
<keyword id="KW-1003">Cell membrane</keyword>
<keyword id="KW-1015">Disulfide bond</keyword>
<keyword id="KW-0245">EGF-like domain</keyword>
<keyword id="KW-0325">Glycoprotein</keyword>
<keyword id="KW-0326">Glycosidase</keyword>
<keyword id="KW-0336">GPI-anchor</keyword>
<keyword id="KW-0378">Hydrolase</keyword>
<keyword id="KW-0449">Lipoprotein</keyword>
<keyword id="KW-0472">Membrane</keyword>
<keyword id="KW-0675">Receptor</keyword>
<keyword id="KW-1185">Reference proteome</keyword>
<keyword id="KW-0732">Signal</keyword>
<gene>
    <name type="primary">Hyal2</name>
</gene>
<proteinExistence type="evidence at protein level"/>
<name>HYAL2_MOUSE</name>
<sequence length="473" mass="53618">MRAGLGPIITLALVLEVAWAGELKPTAPPIFTGRPFVVAWNVPTQECAPRHKVPLDLRAFDVKATPNEGFFNQNITTFYYDRLGLYPRFDAAGTSVHGGVPQNGSLCAHLPMLKESVERYIQTQEPGGLAVIDWEEWRPVWVRNWQEKDVYRQSSRQLVASRHPDWPSDRVMKQAQYEFEFAARQFMLNTLRYVKAVRPQHLWGFYLFPDCYNHDYVQNWESYTGRCPDVEVARNDQLAWLWAESTALFPSVYLDETLASSVHSRNFVSFRVREALRVAHTHHANHALPVYVFTRPTYTRGLTGLSQVDLISTIGESAALGSAGVIFWGDSEDASSMETCQYLKNYLTQLLVPYIVNVSWATQYCSWTQCHGHGRCVRRNPSANTFLHLNASSFRLVPGHTPSEPQLRPEGQLSEADLNYLQKHFRCQCYLGWGGEQCQRNYKGAAGNASRAWAGSHLTSLLGLVAVALTWTL</sequence>
<feature type="signal peptide" evidence="3">
    <location>
        <begin position="1"/>
        <end position="20"/>
    </location>
</feature>
<feature type="chain" id="PRO_0000012101" description="Hyaluronidase-2">
    <location>
        <begin position="21"/>
        <end position="448"/>
    </location>
</feature>
<feature type="propeptide" id="PRO_0000012102" description="Removed in mature form" evidence="3">
    <location>
        <begin position="449"/>
        <end position="473"/>
    </location>
</feature>
<feature type="domain" description="EGF-like">
    <location>
        <begin position="361"/>
        <end position="439"/>
    </location>
</feature>
<feature type="active site" description="Proton donor" evidence="1">
    <location>
        <position position="135"/>
    </location>
</feature>
<feature type="lipid moiety-binding region" description="GPI-anchor amidated asparagine; alternate" evidence="3">
    <location>
        <position position="448"/>
    </location>
</feature>
<feature type="glycosylation site" description="N-linked (GlcNAc...) asparagine" evidence="5">
    <location>
        <position position="74"/>
    </location>
</feature>
<feature type="glycosylation site" description="N-linked (GlcNAc...) asparagine" evidence="3">
    <location>
        <position position="103"/>
    </location>
</feature>
<feature type="glycosylation site" description="N-linked (GlcNAc...) asparagine" evidence="3">
    <location>
        <position position="357"/>
    </location>
</feature>
<feature type="glycosylation site" description="N-linked (GlcNAc...) asparagine" evidence="5">
    <location>
        <position position="390"/>
    </location>
</feature>
<feature type="glycosylation site" description="N-linked (GlcNAc...) asparagine; alternate" evidence="3">
    <location>
        <position position="448"/>
    </location>
</feature>
<feature type="disulfide bond" evidence="1">
    <location>
        <begin position="47"/>
        <end position="340"/>
    </location>
</feature>
<feature type="disulfide bond" evidence="1">
    <location>
        <begin position="211"/>
        <end position="227"/>
    </location>
</feature>
<feature type="disulfide bond" evidence="1">
    <location>
        <begin position="365"/>
        <end position="376"/>
    </location>
</feature>
<feature type="disulfide bond" evidence="1">
    <location>
        <begin position="370"/>
        <end position="427"/>
    </location>
</feature>
<feature type="disulfide bond" evidence="1">
    <location>
        <begin position="429"/>
        <end position="438"/>
    </location>
</feature>
<feature type="sequence conflict" description="In Ref. 1; CAA03888/CAA03889." evidence="10" ref="1">
    <original>TA</original>
    <variation>KP</variation>
    <location>
        <begin position="26"/>
        <end position="27"/>
    </location>
</feature>
<feature type="sequence conflict" description="In Ref. 1; CAA03888." evidence="10" ref="1">
    <original>YVKAVRP</original>
    <variation>LRQGSQT</variation>
    <location>
        <begin position="193"/>
        <end position="199"/>
    </location>
</feature>
<feature type="sequence conflict" description="In Ref. 1; CAA03888." evidence="10" ref="1">
    <location>
        <position position="250"/>
    </location>
</feature>
<feature type="sequence conflict" description="In Ref. 1; CAA03888." evidence="10" ref="1">
    <original>SFRV</original>
    <variation>RFGG</variation>
    <location>
        <begin position="269"/>
        <end position="272"/>
    </location>
</feature>
<feature type="sequence conflict" description="In Ref. 2; AAK28481." evidence="10" ref="2">
    <original>I</original>
    <variation>V</variation>
    <location>
        <position position="355"/>
    </location>
</feature>
<feature type="sequence conflict" description="In Ref. 1; CAA03888/CAA03889." evidence="10" ref="1">
    <original>A</original>
    <variation>V</variation>
    <location>
        <position position="383"/>
    </location>
</feature>
<feature type="sequence conflict" description="In Ref. 1; CAA03888." evidence="10" ref="1">
    <original>ADLNYLQ</original>
    <variation>RDRQLPE</variation>
    <location>
        <begin position="416"/>
        <end position="422"/>
    </location>
</feature>
<reference key="1">
    <citation type="journal article" date="1998" name="Genomics">
        <title>Structural organization and chromosomal localization of Hyal2, a gene encoding a lysosomal hyaluronidase.</title>
        <authorList>
            <person name="Strobl B."/>
            <person name="Wechselberger C."/>
            <person name="Beier D."/>
            <person name="Lepperdinger G."/>
        </authorList>
    </citation>
    <scope>NUCLEOTIDE SEQUENCE [GENOMIC DNA / MRNA]</scope>
    <scope>TISSUE SPECIFICITY</scope>
    <source>
        <strain>129/SvJ</strain>
    </source>
</reference>
<reference key="2">
    <citation type="journal article" date="2001" name="Proc. Natl. Acad. Sci. U.S.A.">
        <title>Candidate tumor suppressor HYAL2 is a glycosylphosphatidylinositol (GPI)-anchored cell-surface receptor for jaagsiekte sheep retrovirus, the envelope protein of which mediates oncogenic transformation.</title>
        <authorList>
            <person name="Rai S.K."/>
            <person name="Duh F.-M."/>
            <person name="Vigdorovich V."/>
            <person name="Danilkovitch-Miagkova A."/>
            <person name="Lerman M.I."/>
            <person name="Miller A.D."/>
        </authorList>
    </citation>
    <scope>NUCLEOTIDE SEQUENCE [MRNA]</scope>
    <source>
        <strain>C3H/HeJ</strain>
        <strain>Czech II</strain>
    </source>
</reference>
<reference key="3">
    <citation type="journal article" date="2002" name="BMC Cell Biol.">
        <title>Transforming growth factor-beta1 blocks the enhancement of tumor necrosis factor cytotoxicity by hyaluronidase Hyal-2 in L929 fibroblasts.</title>
        <authorList>
            <person name="Chang N.-S."/>
        </authorList>
    </citation>
    <scope>NUCLEOTIDE SEQUENCE [MRNA]</scope>
    <source>
        <strain>Czech II</strain>
    </source>
</reference>
<reference key="4">
    <citation type="journal article" date="2001" name="Matrix Biol.">
        <title>Hyal2 -- less active, but more versatile?</title>
        <authorList>
            <person name="Lepperdinger G."/>
            <person name="Mullegger J."/>
            <person name="Kreil G."/>
        </authorList>
    </citation>
    <scope>REVIEW</scope>
</reference>
<reference key="5">
    <citation type="journal article" date="2008" name="FASEB J.">
        <title>Skeletal and hematological anomalies in HYAL2-deficient mice: a second type of mucopolysaccharidosis IX?</title>
        <authorList>
            <person name="Jadin L."/>
            <person name="Wu X."/>
            <person name="Ding H."/>
            <person name="Frost G.I."/>
            <person name="Onclinx C."/>
            <person name="Triggs-Raine B."/>
            <person name="Flamion B."/>
        </authorList>
    </citation>
    <scope>FUNCTION</scope>
    <scope>DISRUPTION PHENOTYPE</scope>
    <scope>TISSUE SPECIFICITY</scope>
</reference>
<reference key="6">
    <citation type="journal article" date="2009" name="Nat. Biotechnol.">
        <title>Mass-spectrometric identification and relative quantification of N-linked cell surface glycoproteins.</title>
        <authorList>
            <person name="Wollscheid B."/>
            <person name="Bausch-Fluck D."/>
            <person name="Henderson C."/>
            <person name="O'Brien R."/>
            <person name="Bibel M."/>
            <person name="Schiess R."/>
            <person name="Aebersold R."/>
            <person name="Watts J.D."/>
        </authorList>
    </citation>
    <scope>GLYCOSYLATION [LARGE SCALE ANALYSIS] AT ASN-74 AND ASN-390</scope>
</reference>
<reference key="7">
    <citation type="journal article" date="2013" name="J. Biol. Chem.">
        <title>Murine hyaluronidase 2 deficiency results in extracellular hyaluronan accumulation and severe cardiopulmonary dysfunction.</title>
        <authorList>
            <person name="Chowdhury B."/>
            <person name="Hemming R."/>
            <person name="Hombach-Klonisch S."/>
            <person name="Flamion B."/>
            <person name="Triggs-Raine B."/>
        </authorList>
    </citation>
    <scope>FUNCTION</scope>
    <scope>DISRUPTION PHENOTYPE</scope>
</reference>
<reference key="8">
    <citation type="journal article" date="2016" name="Histochem. Cell Biol.">
        <title>Hyaluronidase 2 (HYAL2) is expressed in endothelial cells, as well as some specialized epithelial cells, and is required for normal hyaluronan catabolism.</title>
        <authorList>
            <person name="Chowdhury B."/>
            <person name="Hemming R."/>
            <person name="Faiyaz S."/>
            <person name="Triggs-Raine B."/>
        </authorList>
    </citation>
    <scope>FUNCTION</scope>
    <scope>SUBCELLULAR LOCATION</scope>
    <scope>TISSUE SPECIFICITY</scope>
</reference>
<reference key="9">
    <citation type="journal article" date="2017" name="PLoS Genet.">
        <title>Mutations in HYAL2, Encoding Hyaluronidase 2, Cause a Syndrome of Orofacial Clefting and Cor Triatriatum Sinister in Humans and Mice.</title>
        <authorList>
            <person name="Muggenthaler M.M."/>
            <person name="Chowdhury B."/>
            <person name="Hasan S.N."/>
            <person name="Cross H.E."/>
            <person name="Mark B."/>
            <person name="Harlalka G.V."/>
            <person name="Patton M.A."/>
            <person name="Ishida M."/>
            <person name="Behr E.R."/>
            <person name="Sharma S."/>
            <person name="Zahka K."/>
            <person name="Faqeih E."/>
            <person name="Blakley B."/>
            <person name="Jackson M."/>
            <person name="Lees M."/>
            <person name="Dolinsky V."/>
            <person name="Cross L."/>
            <person name="Stanier P."/>
            <person name="Salter C."/>
            <person name="Baple E.L."/>
            <person name="Alkuraya F.S."/>
            <person name="Crosby A.H."/>
            <person name="Triggs-Raine B."/>
            <person name="Chioza B.A."/>
        </authorList>
    </citation>
    <scope>FUNCTION</scope>
    <scope>DISRUPTION PHENOTYPE</scope>
</reference>